<keyword id="KW-0066">ATP synthesis</keyword>
<keyword id="KW-0067">ATP-binding</keyword>
<keyword id="KW-0997">Cell inner membrane</keyword>
<keyword id="KW-1003">Cell membrane</keyword>
<keyword id="KW-0139">CF(1)</keyword>
<keyword id="KW-0375">Hydrogen ion transport</keyword>
<keyword id="KW-0406">Ion transport</keyword>
<keyword id="KW-0472">Membrane</keyword>
<keyword id="KW-0547">Nucleotide-binding</keyword>
<keyword id="KW-1185">Reference proteome</keyword>
<keyword id="KW-1278">Translocase</keyword>
<keyword id="KW-0813">Transport</keyword>
<accession>Q3YVN8</accession>
<evidence type="ECO:0000255" key="1">
    <source>
        <dbReference type="HAMAP-Rule" id="MF_01346"/>
    </source>
</evidence>
<gene>
    <name evidence="1" type="primary">atpA</name>
    <name type="ordered locus">SSON_3885</name>
</gene>
<dbReference type="EC" id="7.1.2.2" evidence="1"/>
<dbReference type="EMBL" id="CP000038">
    <property type="protein sequence ID" value="AAZ90424.1"/>
    <property type="molecule type" value="Genomic_DNA"/>
</dbReference>
<dbReference type="RefSeq" id="WP_001176745.1">
    <property type="nucleotide sequence ID" value="NC_007384.1"/>
</dbReference>
<dbReference type="SMR" id="Q3YVN8"/>
<dbReference type="GeneID" id="93778233"/>
<dbReference type="KEGG" id="ssn:SSON_3885"/>
<dbReference type="HOGENOM" id="CLU_010091_2_1_6"/>
<dbReference type="Proteomes" id="UP000002529">
    <property type="component" value="Chromosome"/>
</dbReference>
<dbReference type="GO" id="GO:0005886">
    <property type="term" value="C:plasma membrane"/>
    <property type="evidence" value="ECO:0007669"/>
    <property type="project" value="UniProtKB-SubCell"/>
</dbReference>
<dbReference type="GO" id="GO:0045259">
    <property type="term" value="C:proton-transporting ATP synthase complex"/>
    <property type="evidence" value="ECO:0007669"/>
    <property type="project" value="UniProtKB-KW"/>
</dbReference>
<dbReference type="GO" id="GO:0043531">
    <property type="term" value="F:ADP binding"/>
    <property type="evidence" value="ECO:0007669"/>
    <property type="project" value="TreeGrafter"/>
</dbReference>
<dbReference type="GO" id="GO:0005524">
    <property type="term" value="F:ATP binding"/>
    <property type="evidence" value="ECO:0007669"/>
    <property type="project" value="UniProtKB-UniRule"/>
</dbReference>
<dbReference type="GO" id="GO:0046933">
    <property type="term" value="F:proton-transporting ATP synthase activity, rotational mechanism"/>
    <property type="evidence" value="ECO:0007669"/>
    <property type="project" value="UniProtKB-UniRule"/>
</dbReference>
<dbReference type="CDD" id="cd18113">
    <property type="entry name" value="ATP-synt_F1_alpha_C"/>
    <property type="match status" value="1"/>
</dbReference>
<dbReference type="CDD" id="cd18116">
    <property type="entry name" value="ATP-synt_F1_alpha_N"/>
    <property type="match status" value="1"/>
</dbReference>
<dbReference type="CDD" id="cd01132">
    <property type="entry name" value="F1-ATPase_alpha_CD"/>
    <property type="match status" value="1"/>
</dbReference>
<dbReference type="FunFam" id="1.20.150.20:FF:000001">
    <property type="entry name" value="ATP synthase subunit alpha"/>
    <property type="match status" value="1"/>
</dbReference>
<dbReference type="FunFam" id="2.40.30.20:FF:000001">
    <property type="entry name" value="ATP synthase subunit alpha"/>
    <property type="match status" value="1"/>
</dbReference>
<dbReference type="FunFam" id="3.40.50.300:FF:000002">
    <property type="entry name" value="ATP synthase subunit alpha"/>
    <property type="match status" value="1"/>
</dbReference>
<dbReference type="Gene3D" id="2.40.30.20">
    <property type="match status" value="1"/>
</dbReference>
<dbReference type="Gene3D" id="1.20.150.20">
    <property type="entry name" value="ATP synthase alpha/beta chain, C-terminal domain"/>
    <property type="match status" value="1"/>
</dbReference>
<dbReference type="Gene3D" id="3.40.50.300">
    <property type="entry name" value="P-loop containing nucleotide triphosphate hydrolases"/>
    <property type="match status" value="1"/>
</dbReference>
<dbReference type="HAMAP" id="MF_01346">
    <property type="entry name" value="ATP_synth_alpha_bact"/>
    <property type="match status" value="1"/>
</dbReference>
<dbReference type="InterPro" id="IPR023366">
    <property type="entry name" value="ATP_synth_asu-like_sf"/>
</dbReference>
<dbReference type="InterPro" id="IPR000793">
    <property type="entry name" value="ATP_synth_asu_C"/>
</dbReference>
<dbReference type="InterPro" id="IPR038376">
    <property type="entry name" value="ATP_synth_asu_C_sf"/>
</dbReference>
<dbReference type="InterPro" id="IPR033732">
    <property type="entry name" value="ATP_synth_F1_a_nt-bd_dom"/>
</dbReference>
<dbReference type="InterPro" id="IPR005294">
    <property type="entry name" value="ATP_synth_F1_asu"/>
</dbReference>
<dbReference type="InterPro" id="IPR020003">
    <property type="entry name" value="ATPase_a/bsu_AS"/>
</dbReference>
<dbReference type="InterPro" id="IPR004100">
    <property type="entry name" value="ATPase_F1/V1/A1_a/bsu_N"/>
</dbReference>
<dbReference type="InterPro" id="IPR036121">
    <property type="entry name" value="ATPase_F1/V1/A1_a/bsu_N_sf"/>
</dbReference>
<dbReference type="InterPro" id="IPR000194">
    <property type="entry name" value="ATPase_F1/V1/A1_a/bsu_nucl-bd"/>
</dbReference>
<dbReference type="InterPro" id="IPR027417">
    <property type="entry name" value="P-loop_NTPase"/>
</dbReference>
<dbReference type="NCBIfam" id="TIGR00962">
    <property type="entry name" value="atpA"/>
    <property type="match status" value="1"/>
</dbReference>
<dbReference type="NCBIfam" id="NF009884">
    <property type="entry name" value="PRK13343.1"/>
    <property type="match status" value="1"/>
</dbReference>
<dbReference type="PANTHER" id="PTHR48082">
    <property type="entry name" value="ATP SYNTHASE SUBUNIT ALPHA, MITOCHONDRIAL"/>
    <property type="match status" value="1"/>
</dbReference>
<dbReference type="PANTHER" id="PTHR48082:SF2">
    <property type="entry name" value="ATP SYNTHASE SUBUNIT ALPHA, MITOCHONDRIAL"/>
    <property type="match status" value="1"/>
</dbReference>
<dbReference type="Pfam" id="PF00006">
    <property type="entry name" value="ATP-synt_ab"/>
    <property type="match status" value="1"/>
</dbReference>
<dbReference type="Pfam" id="PF00306">
    <property type="entry name" value="ATP-synt_ab_C"/>
    <property type="match status" value="1"/>
</dbReference>
<dbReference type="Pfam" id="PF02874">
    <property type="entry name" value="ATP-synt_ab_N"/>
    <property type="match status" value="1"/>
</dbReference>
<dbReference type="SUPFAM" id="SSF47917">
    <property type="entry name" value="C-terminal domain of alpha and beta subunits of F1 ATP synthase"/>
    <property type="match status" value="1"/>
</dbReference>
<dbReference type="SUPFAM" id="SSF50615">
    <property type="entry name" value="N-terminal domain of alpha and beta subunits of F1 ATP synthase"/>
    <property type="match status" value="1"/>
</dbReference>
<dbReference type="SUPFAM" id="SSF52540">
    <property type="entry name" value="P-loop containing nucleoside triphosphate hydrolases"/>
    <property type="match status" value="1"/>
</dbReference>
<dbReference type="PROSITE" id="PS00152">
    <property type="entry name" value="ATPASE_ALPHA_BETA"/>
    <property type="match status" value="1"/>
</dbReference>
<proteinExistence type="inferred from homology"/>
<sequence>MQLNSTEISELIKQRIAQFNVVSEAHNEGTIVSVSDGVIRIHGLADCMQGEMISLPGNRYAIALNLERDSVGAVVMGPYADLAEGMKVKCTGRILEVPVGRGLLGRVVNTLGAPIDGKGPLDHDGFSAVEAIAPGVIERQSVDQPVQTGYKAVDSMIPIGRGQRELIIGDRQTGKTALAIDAIINQRDSGIKCIYVAIGQKASTISNVVRKLEEHGALANTIVVVATASESAALQYLAPYAGCAMGEYFRDRGEDALIIYDDLSKQAVAYRQISLLLRRPPGREAFPGDVFYLHSRLLERAARVNAEYVEAFTKGEVKGKTGSLTALPIIETQAGDVSAFVPTNVISITDGQIFLETNLFNAGIRPAVNPGISVSRVGGAAQTKIMKKLSGGIRTALAQYRELAAFSQFASDLDDATRKQLDHGQKVTELLKQKQYAPMSVAQQSLVLFAAERGYLADVELSKIGSFEAALLAYVDRDHAPLMQEINQTGGYNDEIEGKLKGILDSFKATQSW</sequence>
<organism>
    <name type="scientific">Shigella sonnei (strain Ss046)</name>
    <dbReference type="NCBI Taxonomy" id="300269"/>
    <lineage>
        <taxon>Bacteria</taxon>
        <taxon>Pseudomonadati</taxon>
        <taxon>Pseudomonadota</taxon>
        <taxon>Gammaproteobacteria</taxon>
        <taxon>Enterobacterales</taxon>
        <taxon>Enterobacteriaceae</taxon>
        <taxon>Shigella</taxon>
    </lineage>
</organism>
<reference key="1">
    <citation type="journal article" date="2005" name="Nucleic Acids Res.">
        <title>Genome dynamics and diversity of Shigella species, the etiologic agents of bacillary dysentery.</title>
        <authorList>
            <person name="Yang F."/>
            <person name="Yang J."/>
            <person name="Zhang X."/>
            <person name="Chen L."/>
            <person name="Jiang Y."/>
            <person name="Yan Y."/>
            <person name="Tang X."/>
            <person name="Wang J."/>
            <person name="Xiong Z."/>
            <person name="Dong J."/>
            <person name="Xue Y."/>
            <person name="Zhu Y."/>
            <person name="Xu X."/>
            <person name="Sun L."/>
            <person name="Chen S."/>
            <person name="Nie H."/>
            <person name="Peng J."/>
            <person name="Xu J."/>
            <person name="Wang Y."/>
            <person name="Yuan Z."/>
            <person name="Wen Y."/>
            <person name="Yao Z."/>
            <person name="Shen Y."/>
            <person name="Qiang B."/>
            <person name="Hou Y."/>
            <person name="Yu J."/>
            <person name="Jin Q."/>
        </authorList>
    </citation>
    <scope>NUCLEOTIDE SEQUENCE [LARGE SCALE GENOMIC DNA]</scope>
    <source>
        <strain>Ss046</strain>
    </source>
</reference>
<comment type="function">
    <text evidence="1">Produces ATP from ADP in the presence of a proton gradient across the membrane. The alpha chain is a regulatory subunit.</text>
</comment>
<comment type="catalytic activity">
    <reaction evidence="1">
        <text>ATP + H2O + 4 H(+)(in) = ADP + phosphate + 5 H(+)(out)</text>
        <dbReference type="Rhea" id="RHEA:57720"/>
        <dbReference type="ChEBI" id="CHEBI:15377"/>
        <dbReference type="ChEBI" id="CHEBI:15378"/>
        <dbReference type="ChEBI" id="CHEBI:30616"/>
        <dbReference type="ChEBI" id="CHEBI:43474"/>
        <dbReference type="ChEBI" id="CHEBI:456216"/>
        <dbReference type="EC" id="7.1.2.2"/>
    </reaction>
</comment>
<comment type="subunit">
    <text evidence="1">F-type ATPases have 2 components, CF(1) - the catalytic core - and CF(0) - the membrane proton channel. CF(1) has five subunits: alpha(3), beta(3), gamma(1), delta(1), epsilon(1). CF(0) has three main subunits: a(1), b(2) and c(9-12). The alpha and beta chains form an alternating ring which encloses part of the gamma chain. CF(1) is attached to CF(0) by a central stalk formed by the gamma and epsilon chains, while a peripheral stalk is formed by the delta and b chains.</text>
</comment>
<comment type="subcellular location">
    <subcellularLocation>
        <location evidence="1">Cell inner membrane</location>
        <topology evidence="1">Peripheral membrane protein</topology>
    </subcellularLocation>
</comment>
<comment type="similarity">
    <text evidence="1">Belongs to the ATPase alpha/beta chains family.</text>
</comment>
<name>ATPA_SHISS</name>
<protein>
    <recommendedName>
        <fullName evidence="1">ATP synthase subunit alpha</fullName>
        <ecNumber evidence="1">7.1.2.2</ecNumber>
    </recommendedName>
    <alternativeName>
        <fullName evidence="1">ATP synthase F1 sector subunit alpha</fullName>
    </alternativeName>
    <alternativeName>
        <fullName evidence="1">F-ATPase subunit alpha</fullName>
    </alternativeName>
</protein>
<feature type="chain" id="PRO_0000238354" description="ATP synthase subunit alpha">
    <location>
        <begin position="1"/>
        <end position="513"/>
    </location>
</feature>
<feature type="binding site" evidence="1">
    <location>
        <begin position="169"/>
        <end position="176"/>
    </location>
    <ligand>
        <name>ATP</name>
        <dbReference type="ChEBI" id="CHEBI:30616"/>
    </ligand>
</feature>
<feature type="site" description="Required for activity" evidence="1">
    <location>
        <position position="373"/>
    </location>
</feature>